<protein>
    <recommendedName>
        <fullName>Uncharacterized 341.7 kDa protein in psbD-psbC intergenic region</fullName>
    </recommendedName>
    <alternativeName>
        <fullName>ORF2971</fullName>
    </alternativeName>
    <alternativeName>
        <fullName>ORFB</fullName>
    </alternativeName>
</protein>
<comment type="subcellular location">
    <subcellularLocation>
        <location>Plastid</location>
        <location>Chloroplast</location>
    </subcellularLocation>
</comment>
<name>YCX9_CHLRE</name>
<sequence>MTFLNHYTYLFSIPEKQADKVSGILRLAQARPIETLQNERINKQLNAFLKTYKFEKLITNYKKMQSFIPNNSLNGNKTNSSTNKLYATSLNVFPENPPLMVRKAVSDEADKFSKFTYSKVQVVTNNLNNGMNSKEFIKANNLKPSLRAAESLVLNHLTYNKFKENLYFKTNNIQPTKSKSTSLFFLNILSNSKPRTCSDFLSSPKIRKTWFRNTAWSLQTQQHRSSNGINLSLQLPYALGPSVPAGASGQNMYELPVAQSSSRFGTYYFLQKLLSKYLDVWNASADNGSVLSNSENIKLNFSMVSLLDSKMAIQTPNSLYFVFTQLNQKTFLSYWLLPVAGLALLTPTLLTLTGQSVSVQKFNSFINKKTDMMVLSNTEMPSKSFGTPTLFGTSVEIYLPNSYMPKGEGESGINRVNSSINAVKKNTVTANLVLDSESQEVATSFQNDLISIKYCFNNLYNYISNKTALSTKNLFLFSAIKSNATKHKRTQSFFSVENTTTLGNNSNFVKGHFKSSINAFSSYLPSTNVHSMIPLTSLPYLKAISPLYSKFMIDHSLKFITPKTTLKLLQHKLNKSPKQMYTKTQNFTGLRDLRALNSFSFGQVNFRTNHFLHSNSRPLNHYNQALKLINGYEQYKNNLQINCNKTLDLNTKNKLVYQVHKSHLFNQKCSQIVYKQSLYNRDLCTIRGTGTKVVDYFSHGDKLSNKNGIVLDYFVYSNLLFDNKTNTIINKDGKQNITKLKLNLTKTTVPFKTLIKKYTSINSLVANEQTRNNLNLGLIHFNGHLSVVSNANLLTGRPVKFIYYKFDKRLNSYLIYVNQNLKKFIQLNNNFLKPKPLSHQKNKPVEDFNQYATNNSSPPKTNVFEKSFVEDSSLRKPLTSLRGSKQFLNSLTILFKHQKMFKKKTLKAHKWHSDTQGIFRKHTNSSFGSANFSNGPEESSLSTRLHIQKKRKAKKQRLETRRQKKRTRFFPRPVWLRSRMFLNFLTERNKYYLNSTITKQGFSLPSKDVVTTKLDWLKEDMRPSSLGAYQYKSLLTQKAGNKFQRQSFTEVVSTMEYINGIHKALNNSIFNKIVRKSLLSSSQNPLKLRLVANYSKMQFMHRVKLPFYRTLKHSEGTKNLANKKQNLRDIKIKANYNNFKSQKANNQPQQNDKDKDKDTMFRDFWVWSYNNTQTNAFNQNLWWLLPNLTTKQSNLEFLTSTYPTAKETQRAKEEIHGNSIPTASKNQIALIRLNWALNKTNINTFTDYSKRNNLWTTQKLRNQSKNNKTKSLEKQFITNWEKFFLNKNLNIFSKKIISKVKQKKQKLNYMTSYLNVQSEHNVKIFHNSWWTHLNIKNLVNNQDMVIPVREGYFSVGNFNSEFINSAIIKSINNKTLVENYVYSPSSEKETMQLLLMSSSILLHLCAIISLVSISQVRCFVKFHLILLYKLSNVYNAILNQLSNKLQKNLPIYNNINKLNSRYFYMNHQKSQIKQRKKLLTYFSLTLLKKQFVTVKPLQIRNFASIKNQSSNNSNLTYTDMLPLSLRANKFRGSKYDISIREEEGQSAHIKPSKSMYAKLNILSLKTIFLKQLLMNKKPSALPSNVGLKSNRETQKSQLIQRIKTKELQISLKKNIIGFSKVTKNHILKILFNVIEVFQTAVRNISSFFEKPAEFTTTWIAYGFLVEWSSDFITIIPENVDIYIWNVFSKIYRTIPLSFISTTLGPASTVFDPVTNSTIPIQMGNFNYQKMVAFPILLSLSHLLHRRILYLFDTLFSTITQPDTDLIARQEKGTLFWDIWADFLVTAADYYNVNVAALSTIKAEQNSLIENISNDFDNLTMSSKKPFFMPNKGVSNIKNIFWIKKLKEPQLPESIVQNREVFVRERKRTLKGLFNIYAPQEETLWNNPTSPKNLSDEKISFKLFNQLNLQLFAEKNKIKPYFEAYFSTTQQKTNIMQSAFPEANLNRWSVNQFITYQSWHSHNGSNNSNGDLFIDYHPPKTFSHIPALKYNSILQQPIGSLVCQIYSGLFNKQISKNILLVNPKTTSNNLVDYNVLLIQALAGETEMKIITDNAQRYALVNRGFAIGIKLLREVFDAIALNTPCIFLLEDIHAIGERRPMLISDFGGGMSDDNGSFKEDFFGSQRDEVHEKNQVVYQLTRHAITHYKKPFKGDYSLAIPTNLYVTDLFLKLPTQSISNLTNVENHNLSIKNKIQHNGTQSLTETKRNLGGDINKNSYLQLTQFTKTLAPPSTSPFSVLLLKEEKRLKPNKIVEELPWTSLPGEQLATKPRTSYSVRAKVAMLAELSLSNLSAKLDMITDLLVIIDSVRSNKGFVVFATTDIPHVLDPALRRPGRLDETICLPNIHTSNILNFTKNYEIFKSAKDTSNFGKKIILNEMQNLTTTSTQRDMYLSCLPTNNQTHKTKREGVLTMNLKDYNILLNQVYFAEGTGGILNSQMHKDSLQKSLNFALISHSKKLKELNVSKLIGSNGTVSQGNVDQLGVFAGQIVNKQKKSLQQHLPNSKKSFKKKYKDKAIIYYEVGKFVLNYFLNNQLTQSSIIDKPVSVTNKQTNDITIFGNDFLNLKTINYLSLYNSKNKILLQLMLIFGGKISQLLSSKNLVKSLKQASINSYMVEEESGSISSAGMPLGQTHLLPKALSVLAKPMIFSDGYNNQNLKTATTLLLSFIHKRYLYRKNLIVPKLLSFADGNILDEPPSPPFSSLLIPAKRFENYKRFFRDTLTGDKMGQRKSQITLLEKLQYHMQLRSIKQLNATFSSQENLDFQSNAALTSQKLDTLMSLSTNNLLQNPTNINWYYQNRILKRHGQYLTNQWWNGQLSEHNAETVFLSDIDWRSSFIKNKNINITKSKNLYRLTQQKNNTDGLDVLLDFPDTDQYYNPKRRRWLLNNGSWNFWFNFDKLYSEEIVTTWILESLIQTYKYLHKNTELLDFVTNKFITLGYIAPENANLQNISGFPSQSELLSTKEIILTNSFKRF</sequence>
<accession>Q32065</accession>
<accession>B7U1K5</accession>
<accession>Q95635</accession>
<keyword id="KW-0002">3D-structure</keyword>
<keyword id="KW-0150">Chloroplast</keyword>
<keyword id="KW-0934">Plastid</keyword>
<keyword id="KW-1185">Reference proteome</keyword>
<organism>
    <name type="scientific">Chlamydomonas reinhardtii</name>
    <name type="common">Chlamydomonas smithii</name>
    <dbReference type="NCBI Taxonomy" id="3055"/>
    <lineage>
        <taxon>Eukaryota</taxon>
        <taxon>Viridiplantae</taxon>
        <taxon>Chlorophyta</taxon>
        <taxon>core chlorophytes</taxon>
        <taxon>Chlorophyceae</taxon>
        <taxon>CS clade</taxon>
        <taxon>Chlamydomonadales</taxon>
        <taxon>Chlamydomonadaceae</taxon>
        <taxon>Chlamydomonas</taxon>
    </lineage>
</organism>
<feature type="chain" id="PRO_0000217504" description="Uncharacterized 341.7 kDa protein in psbD-psbC intergenic region">
    <location>
        <begin position="1"/>
        <end position="2971"/>
    </location>
</feature>
<feature type="region of interest" description="Disordered" evidence="1">
    <location>
        <begin position="929"/>
        <end position="964"/>
    </location>
</feature>
<feature type="compositionally biased region" description="Polar residues" evidence="1">
    <location>
        <begin position="936"/>
        <end position="945"/>
    </location>
</feature>
<feature type="compositionally biased region" description="Basic residues" evidence="1">
    <location>
        <begin position="946"/>
        <end position="955"/>
    </location>
</feature>
<feature type="sequence variant" description="In strain: CC-503.">
    <original>H</original>
    <variation>N</variation>
    <location>
        <position position="660"/>
    </location>
</feature>
<feature type="sequence variant" description="In strain: CC-503.">
    <original>PSS</original>
    <variation>RLP</variation>
    <location>
        <begin position="1023"/>
        <end position="1025"/>
    </location>
</feature>
<feature type="helix" evidence="2">
    <location>
        <begin position="268"/>
        <end position="275"/>
    </location>
</feature>
<feature type="turn" evidence="2">
    <location>
        <begin position="327"/>
        <end position="329"/>
    </location>
</feature>
<feature type="helix" evidence="2">
    <location>
        <begin position="332"/>
        <end position="335"/>
    </location>
</feature>
<feature type="helix" evidence="2">
    <location>
        <begin position="336"/>
        <end position="344"/>
    </location>
</feature>
<feature type="helix" evidence="2">
    <location>
        <begin position="346"/>
        <end position="349"/>
    </location>
</feature>
<feature type="helix" evidence="2">
    <location>
        <begin position="448"/>
        <end position="473"/>
    </location>
</feature>
<feature type="strand" evidence="2">
    <location>
        <begin position="542"/>
        <end position="547"/>
    </location>
</feature>
<feature type="helix" evidence="2">
    <location>
        <begin position="549"/>
        <end position="556"/>
    </location>
</feature>
<feature type="helix" evidence="2">
    <location>
        <begin position="567"/>
        <end position="574"/>
    </location>
</feature>
<feature type="helix" evidence="2">
    <location>
        <begin position="619"/>
        <end position="621"/>
    </location>
</feature>
<feature type="helix" evidence="2">
    <location>
        <begin position="625"/>
        <end position="643"/>
    </location>
</feature>
<feature type="strand" evidence="2">
    <location>
        <begin position="745"/>
        <end position="748"/>
    </location>
</feature>
<feature type="helix" evidence="2">
    <location>
        <begin position="810"/>
        <end position="827"/>
    </location>
</feature>
<feature type="helix" evidence="2">
    <location>
        <begin position="891"/>
        <end position="896"/>
    </location>
</feature>
<feature type="turn" evidence="2">
    <location>
        <begin position="897"/>
        <end position="899"/>
    </location>
</feature>
<feature type="helix" evidence="2">
    <location>
        <begin position="938"/>
        <end position="956"/>
    </location>
</feature>
<feature type="strand" evidence="2">
    <location>
        <begin position="960"/>
        <end position="962"/>
    </location>
</feature>
<feature type="strand" evidence="2">
    <location>
        <begin position="964"/>
        <end position="966"/>
    </location>
</feature>
<feature type="helix" evidence="2">
    <location>
        <begin position="974"/>
        <end position="988"/>
    </location>
</feature>
<feature type="helix" evidence="2">
    <location>
        <begin position="989"/>
        <end position="992"/>
    </location>
</feature>
<feature type="helix" evidence="2">
    <location>
        <begin position="1159"/>
        <end position="1171"/>
    </location>
</feature>
<feature type="turn" evidence="2">
    <location>
        <begin position="1172"/>
        <end position="1174"/>
    </location>
</feature>
<feature type="turn" evidence="2">
    <location>
        <begin position="1177"/>
        <end position="1181"/>
    </location>
</feature>
<feature type="helix" evidence="2">
    <location>
        <begin position="1182"/>
        <end position="1184"/>
    </location>
</feature>
<feature type="helix" evidence="2">
    <location>
        <begin position="1222"/>
        <end position="1235"/>
    </location>
</feature>
<feature type="turn" evidence="2">
    <location>
        <begin position="1236"/>
        <end position="1240"/>
    </location>
</feature>
<feature type="helix" evidence="2">
    <location>
        <begin position="1250"/>
        <end position="1262"/>
    </location>
</feature>
<feature type="helix" evidence="2">
    <location>
        <begin position="1292"/>
        <end position="1308"/>
    </location>
</feature>
<feature type="turn" evidence="2">
    <location>
        <begin position="1329"/>
        <end position="1331"/>
    </location>
</feature>
<feature type="helix" evidence="2">
    <location>
        <begin position="1336"/>
        <end position="1339"/>
    </location>
</feature>
<feature type="turn" evidence="2">
    <location>
        <begin position="1340"/>
        <end position="1344"/>
    </location>
</feature>
<feature type="helix" evidence="2">
    <location>
        <begin position="1362"/>
        <end position="1374"/>
    </location>
</feature>
<feature type="helix" evidence="2">
    <location>
        <begin position="1379"/>
        <end position="1381"/>
    </location>
</feature>
<feature type="helix" evidence="2">
    <location>
        <begin position="1388"/>
        <end position="1411"/>
    </location>
</feature>
<feature type="helix" evidence="2">
    <location>
        <begin position="1414"/>
        <end position="1444"/>
    </location>
</feature>
<feature type="turn" evidence="2">
    <location>
        <begin position="1659"/>
        <end position="1668"/>
    </location>
</feature>
<feature type="turn" evidence="2">
    <location>
        <begin position="1671"/>
        <end position="1674"/>
    </location>
</feature>
<feature type="helix" evidence="2">
    <location>
        <begin position="1677"/>
        <end position="1690"/>
    </location>
</feature>
<feature type="helix" evidence="2">
    <location>
        <begin position="1694"/>
        <end position="1702"/>
    </location>
</feature>
<feature type="turn" evidence="2">
    <location>
        <begin position="1728"/>
        <end position="1730"/>
    </location>
</feature>
<feature type="helix" evidence="2">
    <location>
        <begin position="1733"/>
        <end position="1758"/>
    </location>
</feature>
<feature type="helix" evidence="2">
    <location>
        <begin position="1763"/>
        <end position="1776"/>
    </location>
</feature>
<feature type="helix" evidence="2">
    <location>
        <begin position="1779"/>
        <end position="1781"/>
    </location>
</feature>
<feature type="helix" evidence="2">
    <location>
        <begin position="1782"/>
        <end position="1789"/>
    </location>
</feature>
<feature type="helix" evidence="2">
    <location>
        <begin position="1794"/>
        <end position="1796"/>
    </location>
</feature>
<feature type="helix" evidence="2">
    <location>
        <begin position="1802"/>
        <end position="1812"/>
    </location>
</feature>
<feature type="turn" evidence="2">
    <location>
        <begin position="1947"/>
        <end position="1949"/>
    </location>
</feature>
<feature type="strand" evidence="2">
    <location>
        <begin position="1974"/>
        <end position="1976"/>
    </location>
</feature>
<feature type="helix" evidence="2">
    <location>
        <begin position="1981"/>
        <end position="1983"/>
    </location>
</feature>
<feature type="helix" evidence="2">
    <location>
        <begin position="1991"/>
        <end position="2006"/>
    </location>
</feature>
<feature type="turn" evidence="2">
    <location>
        <begin position="2008"/>
        <end position="2010"/>
    </location>
</feature>
<feature type="strand" evidence="2">
    <location>
        <begin position="2011"/>
        <end position="2013"/>
    </location>
</feature>
<feature type="strand" evidence="2">
    <location>
        <begin position="2015"/>
        <end position="2020"/>
    </location>
</feature>
<feature type="helix" evidence="2">
    <location>
        <begin position="2032"/>
        <end position="2044"/>
    </location>
</feature>
<feature type="strand" evidence="2">
    <location>
        <begin position="2047"/>
        <end position="2052"/>
    </location>
</feature>
<feature type="helix" evidence="2">
    <location>
        <begin position="2053"/>
        <end position="2056"/>
    </location>
</feature>
<feature type="helix" evidence="2">
    <location>
        <begin position="2065"/>
        <end position="2076"/>
    </location>
</feature>
<feature type="helix" evidence="2">
    <location>
        <begin position="2077"/>
        <end position="2079"/>
    </location>
</feature>
<feature type="strand" evidence="2">
    <location>
        <begin position="2082"/>
        <end position="2088"/>
    </location>
</feature>
<feature type="turn" evidence="2">
    <location>
        <begin position="2090"/>
        <end position="2093"/>
    </location>
</feature>
<feature type="helix" evidence="2">
    <location>
        <begin position="2116"/>
        <end position="2119"/>
    </location>
</feature>
<feature type="helix" evidence="2">
    <location>
        <begin position="2127"/>
        <end position="2142"/>
    </location>
</feature>
<feature type="helix" evidence="2">
    <location>
        <begin position="2158"/>
        <end position="2168"/>
    </location>
</feature>
<feature type="strand" evidence="2">
    <location>
        <begin position="2179"/>
        <end position="2186"/>
    </location>
</feature>
<feature type="helix" evidence="2">
    <location>
        <begin position="2235"/>
        <end position="2242"/>
    </location>
</feature>
<feature type="helix" evidence="2">
    <location>
        <begin position="2261"/>
        <end position="2265"/>
    </location>
</feature>
<feature type="helix" evidence="2">
    <location>
        <begin position="2269"/>
        <end position="2271"/>
    </location>
</feature>
<feature type="helix" evidence="2">
    <location>
        <begin position="2275"/>
        <end position="2289"/>
    </location>
</feature>
<feature type="helix" evidence="2">
    <location>
        <begin position="2296"/>
        <end position="2304"/>
    </location>
</feature>
<feature type="turn" evidence="2">
    <location>
        <begin position="2305"/>
        <end position="2308"/>
    </location>
</feature>
<feature type="strand" evidence="2">
    <location>
        <begin position="2313"/>
        <end position="2319"/>
    </location>
</feature>
<feature type="strand" evidence="2">
    <location>
        <begin position="2321"/>
        <end position="2324"/>
    </location>
</feature>
<feature type="helix" evidence="2">
    <location>
        <begin position="2327"/>
        <end position="2329"/>
    </location>
</feature>
<feature type="strand" evidence="2">
    <location>
        <begin position="2337"/>
        <end position="2339"/>
    </location>
</feature>
<feature type="helix" evidence="2">
    <location>
        <begin position="2348"/>
        <end position="2359"/>
    </location>
</feature>
<feature type="helix" evidence="2">
    <location>
        <begin position="2368"/>
        <end position="2374"/>
    </location>
</feature>
<feature type="strand" evidence="2">
    <location>
        <begin position="2379"/>
        <end position="2381"/>
    </location>
</feature>
<feature type="helix" evidence="2">
    <location>
        <begin position="2412"/>
        <end position="2421"/>
    </location>
</feature>
<feature type="turn" evidence="2">
    <location>
        <begin position="2422"/>
        <end position="2424"/>
    </location>
</feature>
<feature type="helix" evidence="2">
    <location>
        <begin position="2447"/>
        <end position="2459"/>
    </location>
</feature>
<feature type="helix" evidence="2">
    <location>
        <begin position="2505"/>
        <end position="2530"/>
    </location>
</feature>
<feature type="helix" evidence="2">
    <location>
        <begin position="2562"/>
        <end position="2570"/>
    </location>
</feature>
<feature type="helix" evidence="2">
    <location>
        <begin position="2574"/>
        <end position="2593"/>
    </location>
</feature>
<feature type="helix" evidence="2">
    <location>
        <begin position="2599"/>
        <end position="2602"/>
    </location>
</feature>
<feature type="helix" evidence="2">
    <location>
        <begin position="2632"/>
        <end position="2635"/>
    </location>
</feature>
<feature type="helix" evidence="2">
    <location>
        <begin position="2637"/>
        <end position="2639"/>
    </location>
</feature>
<feature type="helix" evidence="2">
    <location>
        <begin position="2653"/>
        <end position="2667"/>
    </location>
</feature>
<feature type="helix" evidence="2">
    <location>
        <begin position="2674"/>
        <end position="2676"/>
    </location>
</feature>
<feature type="turn" evidence="2">
    <location>
        <begin position="2677"/>
        <end position="2680"/>
    </location>
</feature>
<feature type="turn" evidence="2">
    <location>
        <begin position="2695"/>
        <end position="2697"/>
    </location>
</feature>
<feature type="helix" evidence="2">
    <location>
        <begin position="2702"/>
        <end position="2716"/>
    </location>
</feature>
<feature type="strand" evidence="2">
    <location>
        <begin position="2717"/>
        <end position="2719"/>
    </location>
</feature>
<feature type="strand" evidence="2">
    <location>
        <begin position="2726"/>
        <end position="2728"/>
    </location>
</feature>
<feature type="helix" evidence="2">
    <location>
        <begin position="2732"/>
        <end position="2748"/>
    </location>
</feature>
<feature type="helix" evidence="2">
    <location>
        <begin position="2775"/>
        <end position="2778"/>
    </location>
</feature>
<feature type="helix" evidence="2">
    <location>
        <begin position="2789"/>
        <end position="2795"/>
    </location>
</feature>
<feature type="helix" evidence="2">
    <location>
        <begin position="2796"/>
        <end position="2801"/>
    </location>
</feature>
<feature type="helix" evidence="2">
    <location>
        <begin position="2819"/>
        <end position="2823"/>
    </location>
</feature>
<feature type="strand" evidence="2">
    <location>
        <begin position="2824"/>
        <end position="2827"/>
    </location>
</feature>
<feature type="strand" evidence="2">
    <location>
        <begin position="2871"/>
        <end position="2873"/>
    </location>
</feature>
<feature type="strand" evidence="2">
    <location>
        <begin position="2880"/>
        <end position="2882"/>
    </location>
</feature>
<feature type="strand" evidence="2">
    <location>
        <begin position="2884"/>
        <end position="2886"/>
    </location>
</feature>
<feature type="turn" evidence="2">
    <location>
        <begin position="2893"/>
        <end position="2895"/>
    </location>
</feature>
<feature type="helix" evidence="2">
    <location>
        <begin position="2896"/>
        <end position="2917"/>
    </location>
</feature>
<feature type="helix" evidence="2">
    <location>
        <begin position="2921"/>
        <end position="2932"/>
    </location>
</feature>
<feature type="helix" evidence="2">
    <location>
        <begin position="2959"/>
        <end position="2967"/>
    </location>
</feature>
<proteinExistence type="evidence at protein level"/>
<dbReference type="EMBL" id="U62943">
    <property type="protein sequence ID" value="AAB05800.1"/>
    <property type="molecule type" value="Genomic_DNA"/>
</dbReference>
<dbReference type="EMBL" id="FJ423446">
    <property type="protein sequence ID" value="ACJ50152.1"/>
    <property type="molecule type" value="Genomic_DNA"/>
</dbReference>
<dbReference type="EMBL" id="X13879">
    <property type="protein sequence ID" value="CAA32083.1"/>
    <property type="molecule type" value="Genomic_DNA"/>
</dbReference>
<dbReference type="EMBL" id="BK000554">
    <property type="protein sequence ID" value="DAA00965.2"/>
    <property type="molecule type" value="Genomic_DNA"/>
</dbReference>
<dbReference type="PIR" id="T08026">
    <property type="entry name" value="T08026"/>
</dbReference>
<dbReference type="RefSeq" id="NP_958421.1">
    <property type="nucleotide sequence ID" value="NC_005353.1"/>
</dbReference>
<dbReference type="PDB" id="8XKS">
    <property type="method" value="EM"/>
    <property type="resolution" value="3.20 A"/>
    <property type="chains" value="E=1-2971"/>
</dbReference>
<dbReference type="PDBsum" id="8XKS"/>
<dbReference type="EMDB" id="EMD-38424"/>
<dbReference type="SMR" id="Q32065"/>
<dbReference type="STRING" id="3055.Q32065"/>
<dbReference type="PaxDb" id="3055-DAA00965"/>
<dbReference type="GeneID" id="2716962"/>
<dbReference type="KEGG" id="cre:ChreCp065"/>
<dbReference type="HOGENOM" id="CLU_226216_0_0_1"/>
<dbReference type="InParanoid" id="Q32065"/>
<dbReference type="Proteomes" id="UP000006906">
    <property type="component" value="Chloroplast"/>
</dbReference>
<dbReference type="GO" id="GO:0009507">
    <property type="term" value="C:chloroplast"/>
    <property type="evidence" value="ECO:0007669"/>
    <property type="project" value="UniProtKB-SubCell"/>
</dbReference>
<dbReference type="GO" id="GO:0016887">
    <property type="term" value="F:ATP hydrolysis activity"/>
    <property type="evidence" value="ECO:0000318"/>
    <property type="project" value="GO_Central"/>
</dbReference>
<dbReference type="Gene3D" id="3.40.50.300">
    <property type="entry name" value="P-loop containing nucleotide triphosphate hydrolases"/>
    <property type="match status" value="1"/>
</dbReference>
<dbReference type="InterPro" id="IPR050168">
    <property type="entry name" value="AAA_ATPase_domain"/>
</dbReference>
<dbReference type="InterPro" id="IPR027417">
    <property type="entry name" value="P-loop_NTPase"/>
</dbReference>
<dbReference type="PANTHER" id="PTHR23077:SF117">
    <property type="entry name" value="AAA+ ATPASE DOMAIN-CONTAINING PROTEIN"/>
    <property type="match status" value="1"/>
</dbReference>
<dbReference type="PANTHER" id="PTHR23077">
    <property type="entry name" value="AAA-FAMILY ATPASE"/>
    <property type="match status" value="1"/>
</dbReference>
<dbReference type="SUPFAM" id="SSF52540">
    <property type="entry name" value="P-loop containing nucleoside triphosphate hydrolases"/>
    <property type="match status" value="1"/>
</dbReference>
<geneLocation type="chloroplast"/>
<evidence type="ECO:0000256" key="1">
    <source>
        <dbReference type="SAM" id="MobiDB-lite"/>
    </source>
</evidence>
<evidence type="ECO:0007829" key="2">
    <source>
        <dbReference type="PDB" id="8XKS"/>
    </source>
</evidence>
<reference key="1">
    <citation type="submission" date="1996-07" db="EMBL/GenBank/DDBJ databases">
        <title>Unidentified open reading frame ORF2971 (ORFB) from the chloroplast genome of Chlamydomonas reinhardtii.</title>
        <authorList>
            <person name="Watson A.T."/>
            <person name="Purton S."/>
        </authorList>
    </citation>
    <scope>NUCLEOTIDE SEQUENCE [GENOMIC DNA]</scope>
    <source>
        <strain>137c / CC-125</strain>
    </source>
</reference>
<reference key="2">
    <citation type="journal article" date="2009" name="BMC Evol. Biol.">
        <title>Nucleotide diversity of the Chlamydomonas reinhardtii plastid genome: addressing the mutational-hazard hypothesis.</title>
        <authorList>
            <person name="Smith D.R."/>
            <person name="Lee R.W."/>
        </authorList>
    </citation>
    <scope>NUCLEOTIDE SEQUENCE [LARGE SCALE GENOMIC DNA]</scope>
    <source>
        <strain>CC-503</strain>
    </source>
</reference>
<reference key="3">
    <citation type="journal article" date="1989" name="EMBO J.">
        <title>Nuclear and chloroplast mutations affect the synthesis or stability of the chloroplast psbC gene product in Chlamydomonas reinhardtii.</title>
        <authorList>
            <person name="Rochaix J.-D."/>
            <person name="Kuchka M."/>
            <person name="Mayfield S.P."/>
            <person name="Schirmer-Rahire M."/>
            <person name="Girard-Bascou J."/>
            <person name="Bennoun P."/>
        </authorList>
    </citation>
    <scope>NUCLEOTIDE SEQUENCE [GENOMIC DNA] OF 2635-2971</scope>
    <source>
        <strain>137c / CC-125</strain>
    </source>
</reference>
<reference key="4">
    <citation type="journal article" date="2002" name="Plant Cell">
        <title>The Chlamydomonas reinhardtii plastid chromosome: islands of genes in a sea of repeats.</title>
        <authorList>
            <person name="Maul J.E."/>
            <person name="Lilly J.W."/>
            <person name="Cui L."/>
            <person name="dePamphilis C.W."/>
            <person name="Miller W."/>
            <person name="Harris E.H."/>
            <person name="Stern D.B."/>
        </authorList>
    </citation>
    <scope>IDENTIFICATION</scope>
    <scope>COMPLETE PLASTID GENOME</scope>
</reference>